<gene>
    <name type="primary">gpbp1</name>
    <name type="ORF">TEgg008i02.1</name>
</gene>
<keyword id="KW-0010">Activator</keyword>
<keyword id="KW-0238">DNA-binding</keyword>
<keyword id="KW-0539">Nucleus</keyword>
<keyword id="KW-1185">Reference proteome</keyword>
<keyword id="KW-0804">Transcription</keyword>
<keyword id="KW-0805">Transcription regulation</keyword>
<accession>Q28FE5</accession>
<organism>
    <name type="scientific">Xenopus tropicalis</name>
    <name type="common">Western clawed frog</name>
    <name type="synonym">Silurana tropicalis</name>
    <dbReference type="NCBI Taxonomy" id="8364"/>
    <lineage>
        <taxon>Eukaryota</taxon>
        <taxon>Metazoa</taxon>
        <taxon>Chordata</taxon>
        <taxon>Craniata</taxon>
        <taxon>Vertebrata</taxon>
        <taxon>Euteleostomi</taxon>
        <taxon>Amphibia</taxon>
        <taxon>Batrachia</taxon>
        <taxon>Anura</taxon>
        <taxon>Pipoidea</taxon>
        <taxon>Pipidae</taxon>
        <taxon>Xenopodinae</taxon>
        <taxon>Xenopus</taxon>
        <taxon>Silurana</taxon>
    </lineage>
</organism>
<proteinExistence type="evidence at transcript level"/>
<dbReference type="EMBL" id="CR762006">
    <property type="protein sequence ID" value="CAJ83672.1"/>
    <property type="molecule type" value="mRNA"/>
</dbReference>
<dbReference type="RefSeq" id="NP_001037985.1">
    <property type="nucleotide sequence ID" value="NM_001044520.1"/>
</dbReference>
<dbReference type="FunCoup" id="Q28FE5">
    <property type="interactions" value="3930"/>
</dbReference>
<dbReference type="STRING" id="8364.ENSXETP00000051889"/>
<dbReference type="PaxDb" id="8364-ENSXETP00000033867"/>
<dbReference type="GeneID" id="733777"/>
<dbReference type="KEGG" id="xtr:733777"/>
<dbReference type="AGR" id="Xenbase:XB-GENE-979389"/>
<dbReference type="CTD" id="65056"/>
<dbReference type="Xenbase" id="XB-GENE-979389">
    <property type="gene designation" value="gpbp1"/>
</dbReference>
<dbReference type="eggNOG" id="ENOG502QR5W">
    <property type="taxonomic scope" value="Eukaryota"/>
</dbReference>
<dbReference type="InParanoid" id="Q28FE5"/>
<dbReference type="OMA" id="WREDSEN"/>
<dbReference type="OrthoDB" id="8741226at2759"/>
<dbReference type="Proteomes" id="UP000008143">
    <property type="component" value="Chromosome 1"/>
</dbReference>
<dbReference type="GO" id="GO:0005634">
    <property type="term" value="C:nucleus"/>
    <property type="evidence" value="ECO:0007669"/>
    <property type="project" value="UniProtKB-SubCell"/>
</dbReference>
<dbReference type="GO" id="GO:0003677">
    <property type="term" value="F:DNA binding"/>
    <property type="evidence" value="ECO:0007669"/>
    <property type="project" value="UniProtKB-KW"/>
</dbReference>
<dbReference type="GO" id="GO:0003723">
    <property type="term" value="F:RNA binding"/>
    <property type="evidence" value="ECO:0007669"/>
    <property type="project" value="InterPro"/>
</dbReference>
<dbReference type="GO" id="GO:0006351">
    <property type="term" value="P:DNA-templated transcription"/>
    <property type="evidence" value="ECO:0007669"/>
    <property type="project" value="InterPro"/>
</dbReference>
<dbReference type="GO" id="GO:0045893">
    <property type="term" value="P:positive regulation of DNA-templated transcription"/>
    <property type="evidence" value="ECO:0007669"/>
    <property type="project" value="InterPro"/>
</dbReference>
<dbReference type="InterPro" id="IPR028128">
    <property type="entry name" value="Vasculin_fam"/>
</dbReference>
<dbReference type="PANTHER" id="PTHR14339">
    <property type="entry name" value="VASCULIN"/>
    <property type="match status" value="1"/>
</dbReference>
<dbReference type="PANTHER" id="PTHR14339:SF11">
    <property type="entry name" value="VASCULIN"/>
    <property type="match status" value="1"/>
</dbReference>
<dbReference type="Pfam" id="PF15337">
    <property type="entry name" value="Vasculin"/>
    <property type="match status" value="1"/>
</dbReference>
<sequence>MAQHDFAPAWLNFPTPPSSTKPFLYSDKHSEGLGRSDCAFNVNRQRHSSSDAFDSAIGRPHGGNLAKREKIAWRPQSRAGAEPTWQRDTSPHPYSMKSQLHSENNTSEIDLPRKVDREERKMFEVEDFSSLYPEHERGKNSFAAGLWEYPVSDRSRSSQMLGIKKGVKDDFSLSGYSIAAGNQSLPGKHWAGIKKEECKSLTKESSIGSSFYQDCPHEKYRPNTSLHAELLAVTPCSLEGEEDTNLNNRNGSCPERDINLNFDENKISEDNGNTLMSGQISSAYPPDGVLSSSLEAEFRLLREMGWQEDSENDETCAPLTEDEMKEFQAISEQLQKNGLRKHVFLRNALALDLFHDSVQKEDSETSSSSDTSDDE</sequence>
<protein>
    <recommendedName>
        <fullName>Vasculin</fullName>
    </recommendedName>
    <alternativeName>
        <fullName>GC-rich promoter-binding protein 1</fullName>
    </alternativeName>
</protein>
<comment type="function">
    <text evidence="1">Functions as a GC-rich promoter-specific transactivating transcription factor.</text>
</comment>
<comment type="subcellular location">
    <subcellularLocation>
        <location evidence="1">Nucleus</location>
    </subcellularLocation>
</comment>
<comment type="similarity">
    <text evidence="3">Belongs to the vasculin family.</text>
</comment>
<evidence type="ECO:0000250" key="1">
    <source>
        <dbReference type="UniProtKB" id="Q6NXH3"/>
    </source>
</evidence>
<evidence type="ECO:0000256" key="2">
    <source>
        <dbReference type="SAM" id="MobiDB-lite"/>
    </source>
</evidence>
<evidence type="ECO:0000305" key="3"/>
<name>GPBP1_XENTR</name>
<feature type="chain" id="PRO_0000324114" description="Vasculin">
    <location>
        <begin position="1"/>
        <end position="375"/>
    </location>
</feature>
<feature type="region of interest" description="Disordered" evidence="2">
    <location>
        <begin position="49"/>
        <end position="109"/>
    </location>
</feature>
<feature type="region of interest" description="Disordered" evidence="2">
    <location>
        <begin position="356"/>
        <end position="375"/>
    </location>
</feature>
<feature type="compositionally biased region" description="Polar residues" evidence="2">
    <location>
        <begin position="96"/>
        <end position="108"/>
    </location>
</feature>
<feature type="compositionally biased region" description="Low complexity" evidence="2">
    <location>
        <begin position="365"/>
        <end position="375"/>
    </location>
</feature>
<reference key="1">
    <citation type="submission" date="2006-10" db="EMBL/GenBank/DDBJ databases">
        <authorList>
            <consortium name="Sanger Xenopus tropicalis EST/cDNA project"/>
        </authorList>
    </citation>
    <scope>NUCLEOTIDE SEQUENCE [LARGE SCALE MRNA]</scope>
    <source>
        <tissue>Egg</tissue>
    </source>
</reference>